<sequence length="509" mass="57815">MDVEQKKPLIESSDRNLPDFKKSVKLKYVKLGYHYLITHGMYLFLSPLVLVIAAQISTFSVTDLRSLWEHLQYNLISVVVCSMLLVFLMTIYFMTRPRPVYLVNFSCFKPDESRKCTKKIFMDRSKLTGSFTEENLEFQRKILQRSGLGESTYLPEAVLNVPPNPCMKEARKEAETVMFGAIDELLAKTNVNPKDIGILIVNCSLFNPTPSLSAMVVNHYKLRGNILSYNLGGMGCSAGLISIDLAKHLLHSIPNTYAMVISMENITLNWYFGNDRSKLVSNCLFRMGGAAILLSNKRWDRRRSKYELVDTVRTHKGADDKCFGCITQEEDSASKIGVTLSKELMAVAGDALKTNITTLGPLVLPTSEQLLFFATLVGRKLFKMKIKPYIPDFKLAFEHFCIHAGGRAVLDELEKNLKLTEWHMEPSRMTLYRFGNTSSSSLWYELAYSEAKGRIKKGDRIWQIAFGSGFKCNSSVWRAVRSVNPKKEKNPWMDEIHEFPVEVPKVSTI</sequence>
<feature type="chain" id="PRO_0000249103" description="3-ketoacyl-CoA synthase 11">
    <location>
        <begin position="1"/>
        <end position="509"/>
    </location>
</feature>
<feature type="transmembrane region" description="Helical" evidence="2">
    <location>
        <begin position="36"/>
        <end position="56"/>
    </location>
</feature>
<feature type="transmembrane region" description="Helical" evidence="2">
    <location>
        <begin position="75"/>
        <end position="95"/>
    </location>
</feature>
<feature type="domain" description="FAE" evidence="2">
    <location>
        <begin position="92"/>
        <end position="381"/>
    </location>
</feature>
<feature type="active site" evidence="1">
    <location>
        <position position="236"/>
    </location>
</feature>
<feature type="active site" evidence="1">
    <location>
        <position position="315"/>
    </location>
</feature>
<feature type="active site" evidence="1">
    <location>
        <position position="399"/>
    </location>
</feature>
<feature type="active site" evidence="1">
    <location>
        <position position="403"/>
    </location>
</feature>
<feature type="active site" evidence="1">
    <location>
        <position position="436"/>
    </location>
</feature>
<name>KCS11_ARATH</name>
<organism>
    <name type="scientific">Arabidopsis thaliana</name>
    <name type="common">Mouse-ear cress</name>
    <dbReference type="NCBI Taxonomy" id="3702"/>
    <lineage>
        <taxon>Eukaryota</taxon>
        <taxon>Viridiplantae</taxon>
        <taxon>Streptophyta</taxon>
        <taxon>Embryophyta</taxon>
        <taxon>Tracheophyta</taxon>
        <taxon>Spermatophyta</taxon>
        <taxon>Magnoliopsida</taxon>
        <taxon>eudicotyledons</taxon>
        <taxon>Gunneridae</taxon>
        <taxon>Pentapetalae</taxon>
        <taxon>rosids</taxon>
        <taxon>malvids</taxon>
        <taxon>Brassicales</taxon>
        <taxon>Brassicaceae</taxon>
        <taxon>Camelineae</taxon>
        <taxon>Arabidopsis</taxon>
    </lineage>
</organism>
<protein>
    <recommendedName>
        <fullName evidence="6">3-ketoacyl-CoA synthase 11</fullName>
        <shortName evidence="6">KCS-11</shortName>
        <ecNumber evidence="4">2.3.1.199</ecNumber>
    </recommendedName>
    <alternativeName>
        <fullName evidence="6">Very long-chain fatty acid condensing enzyme 11</fullName>
        <shortName evidence="6">VLCFA condensing enzyme 11</shortName>
    </alternativeName>
</protein>
<keyword id="KW-0012">Acyltransferase</keyword>
<keyword id="KW-0472">Membrane</keyword>
<keyword id="KW-0520">NAD</keyword>
<keyword id="KW-0521">NADP</keyword>
<keyword id="KW-1185">Reference proteome</keyword>
<keyword id="KW-0808">Transferase</keyword>
<keyword id="KW-0812">Transmembrane</keyword>
<keyword id="KW-1133">Transmembrane helix</keyword>
<accession>O48780</accession>
<comment type="function">
    <text evidence="4">Active on both saturated and mono-unsaturated acyl chains C16 to C20.</text>
</comment>
<comment type="catalytic activity">
    <reaction evidence="4">
        <text>a very-long-chain acyl-CoA + malonyl-CoA + H(+) = a very-long-chain 3-oxoacyl-CoA + CO2 + CoA</text>
        <dbReference type="Rhea" id="RHEA:32727"/>
        <dbReference type="ChEBI" id="CHEBI:15378"/>
        <dbReference type="ChEBI" id="CHEBI:16526"/>
        <dbReference type="ChEBI" id="CHEBI:57287"/>
        <dbReference type="ChEBI" id="CHEBI:57384"/>
        <dbReference type="ChEBI" id="CHEBI:90725"/>
        <dbReference type="ChEBI" id="CHEBI:90736"/>
        <dbReference type="EC" id="2.3.1.199"/>
    </reaction>
</comment>
<comment type="pathway">
    <text>Lipid metabolism; fatty acid biosynthesis.</text>
</comment>
<comment type="subcellular location">
    <subcellularLocation>
        <location evidence="2">Membrane</location>
        <topology evidence="2">Multi-pass membrane protein</topology>
    </subcellularLocation>
</comment>
<comment type="tissue specificity">
    <text evidence="5">Only expressed in guard cells. Expressed in siliques, flowers, leaves, stems, roots and seedlings (PubMed:18465198).</text>
</comment>
<comment type="induction">
    <text evidence="3 5">Repressed by herbicides such as flufenacet and benfuresate (PubMed:12916765). Down-regulated by darkness and low temperature (PubMed:18465198).</text>
</comment>
<comment type="similarity">
    <text evidence="7">Belongs to the thiolase-like superfamily. Chalcone/stilbene synthases family.</text>
</comment>
<reference key="1">
    <citation type="journal article" date="1999" name="Nature">
        <title>Sequence and analysis of chromosome 2 of the plant Arabidopsis thaliana.</title>
        <authorList>
            <person name="Lin X."/>
            <person name="Kaul S."/>
            <person name="Rounsley S.D."/>
            <person name="Shea T.P."/>
            <person name="Benito M.-I."/>
            <person name="Town C.D."/>
            <person name="Fujii C.Y."/>
            <person name="Mason T.M."/>
            <person name="Bowman C.L."/>
            <person name="Barnstead M.E."/>
            <person name="Feldblyum T.V."/>
            <person name="Buell C.R."/>
            <person name="Ketchum K.A."/>
            <person name="Lee J.J."/>
            <person name="Ronning C.M."/>
            <person name="Koo H.L."/>
            <person name="Moffat K.S."/>
            <person name="Cronin L.A."/>
            <person name="Shen M."/>
            <person name="Pai G."/>
            <person name="Van Aken S."/>
            <person name="Umayam L."/>
            <person name="Tallon L.J."/>
            <person name="Gill J.E."/>
            <person name="Adams M.D."/>
            <person name="Carrera A.J."/>
            <person name="Creasy T.H."/>
            <person name="Goodman H.M."/>
            <person name="Somerville C.R."/>
            <person name="Copenhaver G.P."/>
            <person name="Preuss D."/>
            <person name="Nierman W.C."/>
            <person name="White O."/>
            <person name="Eisen J.A."/>
            <person name="Salzberg S.L."/>
            <person name="Fraser C.M."/>
            <person name="Venter J.C."/>
        </authorList>
    </citation>
    <scope>NUCLEOTIDE SEQUENCE [LARGE SCALE GENOMIC DNA]</scope>
    <source>
        <strain>cv. Columbia</strain>
    </source>
</reference>
<reference key="2">
    <citation type="journal article" date="2017" name="Plant J.">
        <title>Araport11: a complete reannotation of the Arabidopsis thaliana reference genome.</title>
        <authorList>
            <person name="Cheng C.Y."/>
            <person name="Krishnakumar V."/>
            <person name="Chan A.P."/>
            <person name="Thibaud-Nissen F."/>
            <person name="Schobel S."/>
            <person name="Town C.D."/>
        </authorList>
    </citation>
    <scope>GENOME REANNOTATION</scope>
    <source>
        <strain>cv. Columbia</strain>
    </source>
</reference>
<reference key="3">
    <citation type="journal article" date="2003" name="Science">
        <title>Empirical analysis of transcriptional activity in the Arabidopsis genome.</title>
        <authorList>
            <person name="Yamada K."/>
            <person name="Lim J."/>
            <person name="Dale J.M."/>
            <person name="Chen H."/>
            <person name="Shinn P."/>
            <person name="Palm C.J."/>
            <person name="Southwick A.M."/>
            <person name="Wu H.C."/>
            <person name="Kim C.J."/>
            <person name="Nguyen M."/>
            <person name="Pham P.K."/>
            <person name="Cheuk R.F."/>
            <person name="Karlin-Newmann G."/>
            <person name="Liu S.X."/>
            <person name="Lam B."/>
            <person name="Sakano H."/>
            <person name="Wu T."/>
            <person name="Yu G."/>
            <person name="Miranda M."/>
            <person name="Quach H.L."/>
            <person name="Tripp M."/>
            <person name="Chang C.H."/>
            <person name="Lee J.M."/>
            <person name="Toriumi M.J."/>
            <person name="Chan M.M."/>
            <person name="Tang C.C."/>
            <person name="Onodera C.S."/>
            <person name="Deng J.M."/>
            <person name="Akiyama K."/>
            <person name="Ansari Y."/>
            <person name="Arakawa T."/>
            <person name="Banh J."/>
            <person name="Banno F."/>
            <person name="Bowser L."/>
            <person name="Brooks S.Y."/>
            <person name="Carninci P."/>
            <person name="Chao Q."/>
            <person name="Choy N."/>
            <person name="Enju A."/>
            <person name="Goldsmith A.D."/>
            <person name="Gurjal M."/>
            <person name="Hansen N.F."/>
            <person name="Hayashizaki Y."/>
            <person name="Johnson-Hopson C."/>
            <person name="Hsuan V.W."/>
            <person name="Iida K."/>
            <person name="Karnes M."/>
            <person name="Khan S."/>
            <person name="Koesema E."/>
            <person name="Ishida J."/>
            <person name="Jiang P.X."/>
            <person name="Jones T."/>
            <person name="Kawai J."/>
            <person name="Kamiya A."/>
            <person name="Meyers C."/>
            <person name="Nakajima M."/>
            <person name="Narusaka M."/>
            <person name="Seki M."/>
            <person name="Sakurai T."/>
            <person name="Satou M."/>
            <person name="Tamse R."/>
            <person name="Vaysberg M."/>
            <person name="Wallender E.K."/>
            <person name="Wong C."/>
            <person name="Yamamura Y."/>
            <person name="Yuan S."/>
            <person name="Shinozaki K."/>
            <person name="Davis R.W."/>
            <person name="Theologis A."/>
            <person name="Ecker J.R."/>
        </authorList>
    </citation>
    <scope>NUCLEOTIDE SEQUENCE [LARGE SCALE MRNA]</scope>
    <source>
        <strain>cv. Columbia</strain>
    </source>
</reference>
<reference key="4">
    <citation type="journal article" date="2003" name="Pest Manag. Sci.">
        <title>Flufenacet herbicide treatment phenocopies the fiddlehead mutant in Arabidopsis thaliana.</title>
        <authorList>
            <person name="Lechelt-Kunze C."/>
            <person name="Meissner R.C."/>
            <person name="Drewes M."/>
            <person name="Tietjen K."/>
        </authorList>
    </citation>
    <scope>INDUCTION</scope>
    <scope>GENE FAMILY</scope>
</reference>
<reference key="5">
    <citation type="journal article" date="2006" name="Biochem. Biophys. Res. Commun.">
        <title>Substrate specificity of Arabidopsis 3-ketoacyl-CoA synthases.</title>
        <authorList>
            <person name="Blacklock B.J."/>
            <person name="Jaworski J.G."/>
        </authorList>
    </citation>
    <scope>FUNCTION</scope>
    <scope>CATALYTIC ACTIVITY</scope>
    <scope>SUBSTRATE SPECIFICITY</scope>
</reference>
<reference key="6">
    <citation type="journal article" date="2008" name="Plant Mol. Biol.">
        <title>The VLCFA elongase gene family in Arabidopsis thaliana: phylogenetic analysis, 3D modelling and expression profiling.</title>
        <authorList>
            <person name="Joubes J."/>
            <person name="Raffaele S."/>
            <person name="Bourdenx B."/>
            <person name="Garcia C."/>
            <person name="Laroche-Traineau J."/>
            <person name="Moreau P."/>
            <person name="Domergue F."/>
            <person name="Lessire R."/>
        </authorList>
    </citation>
    <scope>GENE FAMILY</scope>
    <scope>NOMENCLATURE</scope>
    <scope>3D-STRUCTURE MODELING</scope>
    <scope>TISSUE SPECIFICITY</scope>
    <scope>INDUCTION</scope>
</reference>
<proteinExistence type="evidence at protein level"/>
<evidence type="ECO:0000250" key="1">
    <source>
        <dbReference type="UniProtKB" id="Q38860"/>
    </source>
</evidence>
<evidence type="ECO:0000255" key="2"/>
<evidence type="ECO:0000269" key="3">
    <source>
    </source>
</evidence>
<evidence type="ECO:0000269" key="4">
    <source>
    </source>
</evidence>
<evidence type="ECO:0000269" key="5">
    <source>
    </source>
</evidence>
<evidence type="ECO:0000303" key="6">
    <source>
    </source>
</evidence>
<evidence type="ECO:0000305" key="7"/>
<evidence type="ECO:0000312" key="8">
    <source>
        <dbReference type="Araport" id="AT2G26640"/>
    </source>
</evidence>
<evidence type="ECO:0000312" key="9">
    <source>
        <dbReference type="EMBL" id="AAB95298.1"/>
    </source>
</evidence>
<gene>
    <name evidence="6" type="primary">KCS11</name>
    <name evidence="8" type="ordered locus">At2g26640</name>
    <name evidence="9" type="ORF">F18A8.1</name>
</gene>
<dbReference type="EC" id="2.3.1.199" evidence="4"/>
<dbReference type="EMBL" id="AC003105">
    <property type="protein sequence ID" value="AAB95298.1"/>
    <property type="molecule type" value="Genomic_DNA"/>
</dbReference>
<dbReference type="EMBL" id="CP002685">
    <property type="protein sequence ID" value="AEC07869.1"/>
    <property type="molecule type" value="Genomic_DNA"/>
</dbReference>
<dbReference type="EMBL" id="BT003854">
    <property type="protein sequence ID" value="AAO41904.1"/>
    <property type="molecule type" value="mRNA"/>
</dbReference>
<dbReference type="EMBL" id="BT005692">
    <property type="protein sequence ID" value="AAO64112.1"/>
    <property type="molecule type" value="mRNA"/>
</dbReference>
<dbReference type="PIR" id="A84663">
    <property type="entry name" value="A84663"/>
</dbReference>
<dbReference type="RefSeq" id="NP_180232.1">
    <property type="nucleotide sequence ID" value="NM_128221.6"/>
</dbReference>
<dbReference type="SMR" id="O48780"/>
<dbReference type="BioGRID" id="2557">
    <property type="interactions" value="1"/>
</dbReference>
<dbReference type="FunCoup" id="O48780">
    <property type="interactions" value="252"/>
</dbReference>
<dbReference type="IntAct" id="O48780">
    <property type="interactions" value="1"/>
</dbReference>
<dbReference type="STRING" id="3702.O48780"/>
<dbReference type="PaxDb" id="3702-AT2G26640.1"/>
<dbReference type="ProteomicsDB" id="247239"/>
<dbReference type="EnsemblPlants" id="AT2G26640.1">
    <property type="protein sequence ID" value="AT2G26640.1"/>
    <property type="gene ID" value="AT2G26640"/>
</dbReference>
<dbReference type="GeneID" id="817205"/>
<dbReference type="Gramene" id="AT2G26640.1">
    <property type="protein sequence ID" value="AT2G26640.1"/>
    <property type="gene ID" value="AT2G26640"/>
</dbReference>
<dbReference type="KEGG" id="ath:AT2G26640"/>
<dbReference type="Araport" id="AT2G26640"/>
<dbReference type="TAIR" id="AT2G26640">
    <property type="gene designation" value="KCS11"/>
</dbReference>
<dbReference type="eggNOG" id="ENOG502QPKZ">
    <property type="taxonomic scope" value="Eukaryota"/>
</dbReference>
<dbReference type="HOGENOM" id="CLU_013238_2_1_1"/>
<dbReference type="InParanoid" id="O48780"/>
<dbReference type="OMA" id="MGTLIAK"/>
<dbReference type="PhylomeDB" id="O48780"/>
<dbReference type="BioCyc" id="ARA:AT2G26640-MONOMER"/>
<dbReference type="UniPathway" id="UPA00094"/>
<dbReference type="PRO" id="PR:O48780"/>
<dbReference type="Proteomes" id="UP000006548">
    <property type="component" value="Chromosome 2"/>
</dbReference>
<dbReference type="ExpressionAtlas" id="O48780">
    <property type="expression patterns" value="baseline and differential"/>
</dbReference>
<dbReference type="GO" id="GO:0016020">
    <property type="term" value="C:membrane"/>
    <property type="evidence" value="ECO:0007669"/>
    <property type="project" value="UniProtKB-SubCell"/>
</dbReference>
<dbReference type="GO" id="GO:0009922">
    <property type="term" value="F:fatty acid elongase activity"/>
    <property type="evidence" value="ECO:0007669"/>
    <property type="project" value="UniProtKB-EC"/>
</dbReference>
<dbReference type="GO" id="GO:0006633">
    <property type="term" value="P:fatty acid biosynthetic process"/>
    <property type="evidence" value="ECO:0007669"/>
    <property type="project" value="UniProtKB-UniPathway"/>
</dbReference>
<dbReference type="GO" id="GO:0009409">
    <property type="term" value="P:response to cold"/>
    <property type="evidence" value="ECO:0000270"/>
    <property type="project" value="TAIR"/>
</dbReference>
<dbReference type="GO" id="GO:0009416">
    <property type="term" value="P:response to light stimulus"/>
    <property type="evidence" value="ECO:0000270"/>
    <property type="project" value="TAIR"/>
</dbReference>
<dbReference type="CDD" id="cd00831">
    <property type="entry name" value="CHS_like"/>
    <property type="match status" value="1"/>
</dbReference>
<dbReference type="FunFam" id="3.40.47.10:FF:000028">
    <property type="entry name" value="3-ketoacyl-CoA synthase"/>
    <property type="match status" value="1"/>
</dbReference>
<dbReference type="Gene3D" id="3.40.47.10">
    <property type="match status" value="1"/>
</dbReference>
<dbReference type="InterPro" id="IPR012392">
    <property type="entry name" value="3-ktacl-CoA_syn"/>
</dbReference>
<dbReference type="InterPro" id="IPR013747">
    <property type="entry name" value="ACP_syn_III_C"/>
</dbReference>
<dbReference type="InterPro" id="IPR013601">
    <property type="entry name" value="FAE1_typ3_polyketide_synth"/>
</dbReference>
<dbReference type="InterPro" id="IPR016039">
    <property type="entry name" value="Thiolase-like"/>
</dbReference>
<dbReference type="PANTHER" id="PTHR31561">
    <property type="entry name" value="3-KETOACYL-COA SYNTHASE"/>
    <property type="match status" value="1"/>
</dbReference>
<dbReference type="Pfam" id="PF08541">
    <property type="entry name" value="ACP_syn_III_C"/>
    <property type="match status" value="1"/>
</dbReference>
<dbReference type="Pfam" id="PF08392">
    <property type="entry name" value="FAE1_CUT1_RppA"/>
    <property type="match status" value="1"/>
</dbReference>
<dbReference type="PIRSF" id="PIRSF036417">
    <property type="entry name" value="3-ktacl-CoA_syn"/>
    <property type="match status" value="1"/>
</dbReference>
<dbReference type="SUPFAM" id="SSF53901">
    <property type="entry name" value="Thiolase-like"/>
    <property type="match status" value="2"/>
</dbReference>